<dbReference type="EMBL" id="X82002">
    <property type="protein sequence ID" value="CAA57528.1"/>
    <property type="molecule type" value="mRNA"/>
</dbReference>
<dbReference type="EMBL" id="AB028607">
    <property type="protein sequence ID" value="BAA95767.1"/>
    <property type="molecule type" value="Genomic_DNA"/>
</dbReference>
<dbReference type="EMBL" id="CP002686">
    <property type="protein sequence ID" value="AEE77069.1"/>
    <property type="molecule type" value="Genomic_DNA"/>
</dbReference>
<dbReference type="EMBL" id="CP002686">
    <property type="protein sequence ID" value="ANM64959.1"/>
    <property type="molecule type" value="Genomic_DNA"/>
</dbReference>
<dbReference type="EMBL" id="BT002488">
    <property type="protein sequence ID" value="AAO00848.1"/>
    <property type="molecule type" value="mRNA"/>
</dbReference>
<dbReference type="EMBL" id="BT008356">
    <property type="protein sequence ID" value="AAP37715.1"/>
    <property type="molecule type" value="mRNA"/>
</dbReference>
<dbReference type="PIR" id="S51808">
    <property type="entry name" value="S51808"/>
</dbReference>
<dbReference type="RefSeq" id="NP_001326959.1">
    <molecule id="Q38950-1"/>
    <property type="nucleotide sequence ID" value="NM_001338767.1"/>
</dbReference>
<dbReference type="RefSeq" id="NP_189208.1">
    <molecule id="Q38950-1"/>
    <property type="nucleotide sequence ID" value="NM_113479.5"/>
</dbReference>
<dbReference type="PDB" id="7XVK">
    <property type="method" value="X-ray"/>
    <property type="resolution" value="2.29 A"/>
    <property type="chains" value="A=1-390"/>
</dbReference>
<dbReference type="PDBsum" id="7XVK"/>
<dbReference type="SMR" id="Q38950"/>
<dbReference type="BioGRID" id="7502">
    <property type="interactions" value="46"/>
</dbReference>
<dbReference type="FunCoup" id="Q38950">
    <property type="interactions" value="1615"/>
</dbReference>
<dbReference type="IntAct" id="Q38950">
    <property type="interactions" value="5"/>
</dbReference>
<dbReference type="STRING" id="3702.Q38950"/>
<dbReference type="PaxDb" id="3702-AT3G25800.1"/>
<dbReference type="ProteomicsDB" id="244571">
    <molecule id="Q38950-1"/>
</dbReference>
<dbReference type="EnsemblPlants" id="AT3G25800.1">
    <molecule id="Q38950-1"/>
    <property type="protein sequence ID" value="AT3G25800.1"/>
    <property type="gene ID" value="AT3G25800"/>
</dbReference>
<dbReference type="EnsemblPlants" id="AT3G25800.3">
    <molecule id="Q38950-1"/>
    <property type="protein sequence ID" value="AT3G25800.3"/>
    <property type="gene ID" value="AT3G25800"/>
</dbReference>
<dbReference type="GeneID" id="822171"/>
<dbReference type="Gramene" id="AT3G25800.1">
    <molecule id="Q38950-1"/>
    <property type="protein sequence ID" value="AT3G25800.1"/>
    <property type="gene ID" value="AT3G25800"/>
</dbReference>
<dbReference type="Gramene" id="AT3G25800.3">
    <molecule id="Q38950-1"/>
    <property type="protein sequence ID" value="AT3G25800.3"/>
    <property type="gene ID" value="AT3G25800"/>
</dbReference>
<dbReference type="KEGG" id="ath:AT3G25800"/>
<dbReference type="Araport" id="AT3G25800"/>
<dbReference type="TAIR" id="AT3G25800">
    <property type="gene designation" value="PP2AA2"/>
</dbReference>
<dbReference type="eggNOG" id="KOG0211">
    <property type="taxonomic scope" value="Eukaryota"/>
</dbReference>
<dbReference type="HOGENOM" id="CLU_015533_2_1_1"/>
<dbReference type="InParanoid" id="Q38950"/>
<dbReference type="OMA" id="NRVEAMQ"/>
<dbReference type="OrthoDB" id="340346at2759"/>
<dbReference type="PhylomeDB" id="Q38950"/>
<dbReference type="CD-CODE" id="4299E36E">
    <property type="entry name" value="Nucleolus"/>
</dbReference>
<dbReference type="PRO" id="PR:Q38950"/>
<dbReference type="Proteomes" id="UP000006548">
    <property type="component" value="Chromosome 3"/>
</dbReference>
<dbReference type="ExpressionAtlas" id="Q38950">
    <property type="expression patterns" value="baseline and differential"/>
</dbReference>
<dbReference type="GO" id="GO:0005829">
    <property type="term" value="C:cytosol"/>
    <property type="evidence" value="ECO:0007005"/>
    <property type="project" value="TAIR"/>
</dbReference>
<dbReference type="GO" id="GO:0005634">
    <property type="term" value="C:nucleus"/>
    <property type="evidence" value="ECO:0007669"/>
    <property type="project" value="UniProtKB-SubCell"/>
</dbReference>
<dbReference type="GO" id="GO:0005777">
    <property type="term" value="C:peroxisome"/>
    <property type="evidence" value="ECO:0007669"/>
    <property type="project" value="UniProtKB-SubCell"/>
</dbReference>
<dbReference type="GO" id="GO:0042325">
    <property type="term" value="P:regulation of phosphorylation"/>
    <property type="evidence" value="ECO:0000250"/>
    <property type="project" value="TAIR"/>
</dbReference>
<dbReference type="FunFam" id="1.25.10.10:FF:000062">
    <property type="entry name" value="Serine/threonine-protein phosphatase 2A regulatory subunit A alpha isoform"/>
    <property type="match status" value="1"/>
</dbReference>
<dbReference type="Gene3D" id="1.25.10.10">
    <property type="entry name" value="Leucine-rich Repeat Variant"/>
    <property type="match status" value="1"/>
</dbReference>
<dbReference type="InterPro" id="IPR011989">
    <property type="entry name" value="ARM-like"/>
</dbReference>
<dbReference type="InterPro" id="IPR016024">
    <property type="entry name" value="ARM-type_fold"/>
</dbReference>
<dbReference type="InterPro" id="IPR000357">
    <property type="entry name" value="HEAT"/>
</dbReference>
<dbReference type="InterPro" id="IPR021133">
    <property type="entry name" value="HEAT_type_2"/>
</dbReference>
<dbReference type="InterPro" id="IPR054573">
    <property type="entry name" value="PP2A/SF3B1-like_HEAT"/>
</dbReference>
<dbReference type="InterPro" id="IPR051023">
    <property type="entry name" value="PP2A_Regulatory_Subunit_A"/>
</dbReference>
<dbReference type="PANTHER" id="PTHR10648">
    <property type="entry name" value="SERINE/THREONINE-PROTEIN PHOSPHATASE PP2A 65 KDA REGULATORY SUBUNIT"/>
    <property type="match status" value="1"/>
</dbReference>
<dbReference type="PANTHER" id="PTHR10648:SF36">
    <property type="entry name" value="SERINE_THREONINE-PROTEIN PHOSPHATASE 2A 65 KDA REGULATORY SUBUNIT A BETA ISOFORM-RELATED"/>
    <property type="match status" value="1"/>
</dbReference>
<dbReference type="Pfam" id="PF02985">
    <property type="entry name" value="HEAT"/>
    <property type="match status" value="3"/>
</dbReference>
<dbReference type="Pfam" id="PF22646">
    <property type="entry name" value="PPP2R1A-like_HEAT"/>
    <property type="match status" value="1"/>
</dbReference>
<dbReference type="SUPFAM" id="SSF48371">
    <property type="entry name" value="ARM repeat"/>
    <property type="match status" value="1"/>
</dbReference>
<dbReference type="PROSITE" id="PS50077">
    <property type="entry name" value="HEAT_REPEAT"/>
    <property type="match status" value="13"/>
</dbReference>
<protein>
    <recommendedName>
        <fullName>Serine/threonine-protein phosphatase 2A 65 kDa regulatory subunit A beta isoform</fullName>
        <shortName>AtA beta</shortName>
        <shortName>PP2A, subunit A, beta isoform</shortName>
    </recommendedName>
</protein>
<organism>
    <name type="scientific">Arabidopsis thaliana</name>
    <name type="common">Mouse-ear cress</name>
    <dbReference type="NCBI Taxonomy" id="3702"/>
    <lineage>
        <taxon>Eukaryota</taxon>
        <taxon>Viridiplantae</taxon>
        <taxon>Streptophyta</taxon>
        <taxon>Embryophyta</taxon>
        <taxon>Tracheophyta</taxon>
        <taxon>Spermatophyta</taxon>
        <taxon>Magnoliopsida</taxon>
        <taxon>eudicotyledons</taxon>
        <taxon>Gunneridae</taxon>
        <taxon>Pentapetalae</taxon>
        <taxon>rosids</taxon>
        <taxon>malvids</taxon>
        <taxon>Brassicales</taxon>
        <taxon>Brassicaceae</taxon>
        <taxon>Camelineae</taxon>
        <taxon>Arabidopsis</taxon>
    </lineage>
</organism>
<evidence type="ECO:0000250" key="1"/>
<evidence type="ECO:0000250" key="2">
    <source>
        <dbReference type="UniProtKB" id="P62714"/>
    </source>
</evidence>
<evidence type="ECO:0000250" key="3">
    <source>
        <dbReference type="UniProtKB" id="Q38951"/>
    </source>
</evidence>
<evidence type="ECO:0000269" key="4">
    <source>
    </source>
</evidence>
<evidence type="ECO:0000269" key="5">
    <source>
    </source>
</evidence>
<evidence type="ECO:0000269" key="6">
    <source>
    </source>
</evidence>
<evidence type="ECO:0000269" key="7">
    <source>
    </source>
</evidence>
<evidence type="ECO:0000269" key="8">
    <source>
    </source>
</evidence>
<evidence type="ECO:0000305" key="9"/>
<evidence type="ECO:0007829" key="10">
    <source>
        <dbReference type="PDB" id="7XVK"/>
    </source>
</evidence>
<accession>Q38950</accession>
<accession>Q9LRZ9</accession>
<reference key="1">
    <citation type="journal article" date="1994" name="Plant Mol. Biol.">
        <title>Characterisation of cDNA and genomic clones encoding homologues of the 65 kDa regulatory subunit of protein phosphatase 2A in Arabidopsis thaliana.</title>
        <authorList>
            <person name="Slabas A.R."/>
            <person name="Fordham-Skelton A.P."/>
            <person name="Fletcher D."/>
            <person name="Martinez-Rivas J.M."/>
            <person name="Swinhoe R."/>
            <person name="Croy R.R.D."/>
            <person name="Evans I.M."/>
        </authorList>
    </citation>
    <scope>NUCLEOTIDE SEQUENCE [MRNA]</scope>
    <source>
        <strain>cv. Landsberg erecta</strain>
        <tissue>Leaf</tissue>
    </source>
</reference>
<reference key="2">
    <citation type="journal article" date="2000" name="DNA Res.">
        <title>Structural analysis of Arabidopsis thaliana chromosome 3. I. Sequence features of the regions of 4,504,864 bp covered by sixty P1 and TAC clones.</title>
        <authorList>
            <person name="Sato S."/>
            <person name="Nakamura Y."/>
            <person name="Kaneko T."/>
            <person name="Katoh T."/>
            <person name="Asamizu E."/>
            <person name="Tabata S."/>
        </authorList>
    </citation>
    <scope>NUCLEOTIDE SEQUENCE [LARGE SCALE GENOMIC DNA]</scope>
    <source>
        <strain>cv. Columbia</strain>
    </source>
</reference>
<reference key="3">
    <citation type="journal article" date="2017" name="Plant J.">
        <title>Araport11: a complete reannotation of the Arabidopsis thaliana reference genome.</title>
        <authorList>
            <person name="Cheng C.Y."/>
            <person name="Krishnakumar V."/>
            <person name="Chan A.P."/>
            <person name="Thibaud-Nissen F."/>
            <person name="Schobel S."/>
            <person name="Town C.D."/>
        </authorList>
    </citation>
    <scope>GENOME REANNOTATION</scope>
    <source>
        <strain>cv. Columbia</strain>
    </source>
</reference>
<reference key="4">
    <citation type="journal article" date="2003" name="Science">
        <title>Empirical analysis of transcriptional activity in the Arabidopsis genome.</title>
        <authorList>
            <person name="Yamada K."/>
            <person name="Lim J."/>
            <person name="Dale J.M."/>
            <person name="Chen H."/>
            <person name="Shinn P."/>
            <person name="Palm C.J."/>
            <person name="Southwick A.M."/>
            <person name="Wu H.C."/>
            <person name="Kim C.J."/>
            <person name="Nguyen M."/>
            <person name="Pham P.K."/>
            <person name="Cheuk R.F."/>
            <person name="Karlin-Newmann G."/>
            <person name="Liu S.X."/>
            <person name="Lam B."/>
            <person name="Sakano H."/>
            <person name="Wu T."/>
            <person name="Yu G."/>
            <person name="Miranda M."/>
            <person name="Quach H.L."/>
            <person name="Tripp M."/>
            <person name="Chang C.H."/>
            <person name="Lee J.M."/>
            <person name="Toriumi M.J."/>
            <person name="Chan M.M."/>
            <person name="Tang C.C."/>
            <person name="Onodera C.S."/>
            <person name="Deng J.M."/>
            <person name="Akiyama K."/>
            <person name="Ansari Y."/>
            <person name="Arakawa T."/>
            <person name="Banh J."/>
            <person name="Banno F."/>
            <person name="Bowser L."/>
            <person name="Brooks S.Y."/>
            <person name="Carninci P."/>
            <person name="Chao Q."/>
            <person name="Choy N."/>
            <person name="Enju A."/>
            <person name="Goldsmith A.D."/>
            <person name="Gurjal M."/>
            <person name="Hansen N.F."/>
            <person name="Hayashizaki Y."/>
            <person name="Johnson-Hopson C."/>
            <person name="Hsuan V.W."/>
            <person name="Iida K."/>
            <person name="Karnes M."/>
            <person name="Khan S."/>
            <person name="Koesema E."/>
            <person name="Ishida J."/>
            <person name="Jiang P.X."/>
            <person name="Jones T."/>
            <person name="Kawai J."/>
            <person name="Kamiya A."/>
            <person name="Meyers C."/>
            <person name="Nakajima M."/>
            <person name="Narusaka M."/>
            <person name="Seki M."/>
            <person name="Sakurai T."/>
            <person name="Satou M."/>
            <person name="Tamse R."/>
            <person name="Vaysberg M."/>
            <person name="Wallender E.K."/>
            <person name="Wong C."/>
            <person name="Yamamura Y."/>
            <person name="Yuan S."/>
            <person name="Shinozaki K."/>
            <person name="Davis R.W."/>
            <person name="Theologis A."/>
            <person name="Ecker J.R."/>
        </authorList>
    </citation>
    <scope>NUCLEOTIDE SEQUENCE [LARGE SCALE MRNA]</scope>
    <source>
        <strain>cv. Columbia</strain>
    </source>
</reference>
<reference key="5">
    <citation type="journal article" date="2004" name="Plant Cell">
        <title>Disparate roles for the regulatory A subunit isoforms in Arabidopsis protein phosphatase 2A.</title>
        <authorList>
            <person name="Zhou H.-W."/>
            <person name="Nussbaumer C."/>
            <person name="Chao Y."/>
            <person name="DeLong A."/>
        </authorList>
    </citation>
    <scope>FUNCTION</scope>
    <scope>TISSUE SPECIFICITY</scope>
</reference>
<reference key="6">
    <citation type="journal article" date="2012" name="Plant J.">
        <title>Arabidopsis thaliana histone deacetylase 14 (HDA14) is an alpha-tubulin deacetylase that associates with PP2A and enriches in the microtubule fraction with the putative histone acetyltransferase ELP3.</title>
        <authorList>
            <person name="Tran H.T."/>
            <person name="Nimick M."/>
            <person name="Uhrig R.G."/>
            <person name="Templeton G."/>
            <person name="Morrice N."/>
            <person name="Gourlay R."/>
            <person name="DeLong A."/>
            <person name="Moorhead G.B."/>
        </authorList>
    </citation>
    <scope>SUBCELLULAR LOCATION</scope>
</reference>
<reference key="7">
    <citation type="journal article" date="2015" name="Plant Physiol.">
        <title>Protein phosphatase 2A holoenzyme is targeted to peroxisomes by piggybacking and positively affects peroxisomal beta-oxidation.</title>
        <authorList>
            <person name="Kataya A.R."/>
            <person name="Heidari B."/>
            <person name="Hagen L."/>
            <person name="Kommedal R."/>
            <person name="Slupphaug G."/>
            <person name="Lillo C."/>
        </authorList>
    </citation>
    <scope>FUNCTION</scope>
    <scope>INTERACTION WITH B'THETA</scope>
    <scope>SUBCELLULAR LOCATION</scope>
</reference>
<reference key="8">
    <citation type="journal article" date="2015" name="Plant Physiol.">
        <title>Identification of Open Stomata1-interacting proteins reveals interactions with sucrose non-fermenting1-related protein kinases2 and with type 2a protein phosphatases that function in abscisic acid responses.</title>
        <authorList>
            <person name="Waadt R."/>
            <person name="Manalansan B."/>
            <person name="Rauniyar N."/>
            <person name="Munemasa S."/>
            <person name="Booker M.A."/>
            <person name="Brandt B."/>
            <person name="Waadt C."/>
            <person name="Nusinow D.A."/>
            <person name="Kay S.A."/>
            <person name="Kunz H.H."/>
            <person name="Schumacher K."/>
            <person name="DeLong A."/>
            <person name="Yates J.R. III"/>
            <person name="Schroeder J.I."/>
        </authorList>
    </citation>
    <scope>IDENTIFICATION BY MASS SPECTROMETRY</scope>
    <scope>INTERACTION WITH SRK2E/OST1</scope>
</reference>
<reference key="9">
    <citation type="journal article" date="2016" name="Proc. Natl. Acad. Sci. U.S.A.">
        <title>ROTUNDA3 function in plant development by phosphatase 2A-mediated regulation of auxin transporter recycling.</title>
        <authorList>
            <person name="Karampelias M."/>
            <person name="Neyt P."/>
            <person name="De Groeve S."/>
            <person name="Aesaert S."/>
            <person name="Coussens G."/>
            <person name="Rolcik J."/>
            <person name="Bruno L."/>
            <person name="De Winne N."/>
            <person name="Van Minnebruggen A."/>
            <person name="Van Montagu M."/>
            <person name="Ponce M.R."/>
            <person name="Micol J.L."/>
            <person name="Friml J."/>
            <person name="De Jaeger G."/>
            <person name="Van Lijsebettens M."/>
        </authorList>
    </citation>
    <scope>INTERACTION WITH SIC/RON3</scope>
    <source>
        <strain>cv. Columbia</strain>
        <strain>cv. Landsberg erecta</strain>
    </source>
</reference>
<sequence length="587" mass="65598">MSMIDEPLYPIAVLIDELKNDDIQLRLNSIRRLSTIARALGEERTRKELIPFLSENNDDDDEVLLAMAEELGVFIPYVGGVEYAHVLLPPLETLSTVEETCVREKAVESLCRVGSQMRESDLVDHFISLVKRLAAGEWFTARVSACGVFHIAYPSAPDMLKTELRSLYTQLCQDDMPMVRRAAATNLGKFAATVESAHLKTDVMSMFEDLTQDDQDSVRLLAVEGCAALGKLLEPQDCVQHILPVIVNFSQDKSWRVRYMVANQLYELCEAVGPEPTRTELVPAYVRLLRDNEAEVRIAAAGKVTKFCRILNPEIAIQHILPCVKELSSDSSQHVRSALASVIMGMAPVLGKDATIEHLLPIFLSLLKDEFPDVRLNIISKLDQVNQVIGIDLLSQSLLPAIVELAEDRHWRVRLAIIEYIPLLASQLGVGFFDDKLGALCMQWLQDKVHSIRDAAANNLKRLAEEFGPEWAMQHIVPQVLEMVNNPHYLYRMTILRAVSLLAPVMGSEITCSKLLPVVMTASKDRVPNIKFNVAKVLQSLIPIVDQSVVEKTIRPGLVELSEDPDVDVRFFANQALQSIDNVMMSS</sequence>
<gene>
    <name type="primary">PP2AA2</name>
    <name type="synonym">DF1</name>
    <name type="ordered locus">At3g25800</name>
    <name type="ORF">K13N2.14</name>
</gene>
<name>2AAB_ARATH</name>
<keyword id="KW-0002">3D-structure</keyword>
<keyword id="KW-0007">Acetylation</keyword>
<keyword id="KW-0025">Alternative splicing</keyword>
<keyword id="KW-0963">Cytoplasm</keyword>
<keyword id="KW-0539">Nucleus</keyword>
<keyword id="KW-0576">Peroxisome</keyword>
<keyword id="KW-1185">Reference proteome</keyword>
<keyword id="KW-0677">Repeat</keyword>
<feature type="initiator methionine" description="Removed" evidence="3">
    <location>
        <position position="1"/>
    </location>
</feature>
<feature type="chain" id="PRO_0000071410" description="Serine/threonine-protein phosphatase 2A 65 kDa regulatory subunit A beta isoform">
    <location>
        <begin position="2"/>
        <end position="587"/>
    </location>
</feature>
<feature type="repeat" description="HEAT 1">
    <location>
        <begin position="2"/>
        <end position="42"/>
    </location>
</feature>
<feature type="repeat" description="HEAT 2">
    <location>
        <begin position="44"/>
        <end position="80"/>
    </location>
</feature>
<feature type="repeat" description="HEAT 3">
    <location>
        <begin position="81"/>
        <end position="119"/>
    </location>
</feature>
<feature type="repeat" description="HEAT 4">
    <location>
        <begin position="158"/>
        <end position="196"/>
    </location>
</feature>
<feature type="repeat" description="HEAT 5">
    <location>
        <begin position="197"/>
        <end position="235"/>
    </location>
</feature>
<feature type="repeat" description="HEAT 6">
    <location>
        <begin position="236"/>
        <end position="274"/>
    </location>
</feature>
<feature type="repeat" description="HEAT 7">
    <location>
        <begin position="275"/>
        <end position="313"/>
    </location>
</feature>
<feature type="repeat" description="HEAT 8">
    <location>
        <begin position="315"/>
        <end position="352"/>
    </location>
</feature>
<feature type="repeat" description="HEAT 9">
    <location>
        <begin position="353"/>
        <end position="391"/>
    </location>
</feature>
<feature type="repeat" description="HEAT 10">
    <location>
        <begin position="393"/>
        <end position="430"/>
    </location>
</feature>
<feature type="repeat" description="HEAT 11">
    <location>
        <begin position="432"/>
        <end position="469"/>
    </location>
</feature>
<feature type="repeat" description="HEAT 12">
    <location>
        <begin position="470"/>
        <end position="508"/>
    </location>
</feature>
<feature type="repeat" description="HEAT 13">
    <location>
        <begin position="509"/>
        <end position="547"/>
    </location>
</feature>
<feature type="repeat" description="HEAT 14">
    <location>
        <begin position="549"/>
        <end position="586"/>
    </location>
</feature>
<feature type="modified residue" description="N-acetylserine" evidence="3">
    <location>
        <position position="2"/>
    </location>
</feature>
<feature type="sequence conflict" description="In Ref. 1; CAA57528." evidence="9" ref="1">
    <original>H</original>
    <variation>D</variation>
    <location>
        <position position="319"/>
    </location>
</feature>
<feature type="helix" evidence="10">
    <location>
        <begin position="5"/>
        <end position="17"/>
    </location>
</feature>
<feature type="helix" evidence="10">
    <location>
        <begin position="23"/>
        <end position="31"/>
    </location>
</feature>
<feature type="helix" evidence="10">
    <location>
        <begin position="33"/>
        <end position="40"/>
    </location>
</feature>
<feature type="helix" evidence="10">
    <location>
        <begin position="42"/>
        <end position="47"/>
    </location>
</feature>
<feature type="helix" evidence="10">
    <location>
        <begin position="49"/>
        <end position="55"/>
    </location>
</feature>
<feature type="helix" evidence="10">
    <location>
        <begin position="61"/>
        <end position="71"/>
    </location>
</feature>
<feature type="helix" evidence="10">
    <location>
        <begin position="76"/>
        <end position="78"/>
    </location>
</feature>
<feature type="helix" evidence="10">
    <location>
        <begin position="81"/>
        <end position="87"/>
    </location>
</feature>
<feature type="helix" evidence="10">
    <location>
        <begin position="88"/>
        <end position="95"/>
    </location>
</feature>
<feature type="helix" evidence="10">
    <location>
        <begin position="100"/>
        <end position="116"/>
    </location>
</feature>
<feature type="helix" evidence="10">
    <location>
        <begin position="119"/>
        <end position="134"/>
    </location>
</feature>
<feature type="helix" evidence="10">
    <location>
        <begin position="139"/>
        <end position="146"/>
    </location>
</feature>
<feature type="helix" evidence="10">
    <location>
        <begin position="149"/>
        <end position="152"/>
    </location>
</feature>
<feature type="turn" evidence="10">
    <location>
        <begin position="153"/>
        <end position="155"/>
    </location>
</feature>
<feature type="helix" evidence="10">
    <location>
        <begin position="158"/>
        <end position="172"/>
    </location>
</feature>
<feature type="helix" evidence="10">
    <location>
        <begin position="177"/>
        <end position="191"/>
    </location>
</feature>
<feature type="helix" evidence="10">
    <location>
        <begin position="196"/>
        <end position="199"/>
    </location>
</feature>
<feature type="helix" evidence="10">
    <location>
        <begin position="202"/>
        <end position="211"/>
    </location>
</feature>
<feature type="helix" evidence="10">
    <location>
        <begin position="216"/>
        <end position="224"/>
    </location>
</feature>
<feature type="helix" evidence="10">
    <location>
        <begin position="226"/>
        <end position="232"/>
    </location>
</feature>
<feature type="helix" evidence="10">
    <location>
        <begin position="235"/>
        <end position="249"/>
    </location>
</feature>
<feature type="helix" evidence="10">
    <location>
        <begin position="255"/>
        <end position="272"/>
    </location>
</feature>
<feature type="helix" evidence="10">
    <location>
        <begin position="274"/>
        <end position="279"/>
    </location>
</feature>
<feature type="helix" evidence="10">
    <location>
        <begin position="281"/>
        <end position="289"/>
    </location>
</feature>
<feature type="helix" evidence="10">
    <location>
        <begin position="294"/>
        <end position="301"/>
    </location>
</feature>
<feature type="helix" evidence="10">
    <location>
        <begin position="304"/>
        <end position="309"/>
    </location>
</feature>
<feature type="helix" evidence="10">
    <location>
        <begin position="313"/>
        <end position="328"/>
    </location>
</feature>
<feature type="helix" evidence="10">
    <location>
        <begin position="333"/>
        <end position="343"/>
    </location>
</feature>
<feature type="helix" evidence="10">
    <location>
        <begin position="346"/>
        <end position="350"/>
    </location>
</feature>
<feature type="helix" evidence="10">
    <location>
        <begin position="352"/>
        <end position="358"/>
    </location>
</feature>
<feature type="helix" evidence="10">
    <location>
        <begin position="360"/>
        <end position="367"/>
    </location>
</feature>
<feature type="helix" evidence="10">
    <location>
        <begin position="372"/>
        <end position="380"/>
    </location>
</feature>
<comment type="function">
    <text evidence="4 6">The A subunit of protein phosphatase 2A serves as a scaffolding molecule to coordinate the assembly of the catalytic subunit and a variable regulatory B subunit. Involved during developmental process such as seedling and floral developments. Seems to act as a negative regulator of PP2A catalytic activity. Associates with the serine/threonine-protein phosphatase PP2A catalytic subunit C and regulatory subunit B' to positively regulates beta-oxidation of fatty acids and protoauxins in peroxisomes by dephosphorylating peroxisomal beta-oxidation-related proteins (PubMed:25489022).</text>
</comment>
<comment type="subunit">
    <text evidence="2 6 7 8">PP2A consists of a common heterodimeric core enzyme, composed of a 36 kDa catalytic subunit (subunit C) and a 65 kDa constant regulatory subunit (subunit A), that associates with a variety of regulatory subunits such as subunits B (the R2/B/PR55/B55, R3/B''/PR72/PR130/PR59 and R5/B'/B56 families) (By similarity). Interacts with B'THETA (PubMed:25489022). Interacts with SRK2E/OST1 (PubMed:26175513). Interacts with SIC/RON3 (PubMed:26888284).</text>
</comment>
<comment type="interaction">
    <interactant intactId="EBI-4467372">
        <id>Q38950</id>
    </interactant>
    <interactant intactId="EBI-25519488">
        <id>Q9SZU7</id>
        <label>KAI2</label>
    </interactant>
    <organismsDiffer>false</organismsDiffer>
    <experiments>3</experiments>
</comment>
<comment type="subcellular location">
    <subcellularLocation>
        <location evidence="5 6">Cytoplasm</location>
        <location evidence="5 6">Cytosol</location>
    </subcellularLocation>
    <subcellularLocation>
        <location evidence="5">Nucleus</location>
    </subcellularLocation>
    <subcellularLocation>
        <location evidence="6">Peroxisome</location>
    </subcellularLocation>
    <text evidence="6">Interacts with B'THETA in the cytosol and peroxisomal import occurs by a piggybacking transport.</text>
</comment>
<comment type="alternative products">
    <event type="alternative splicing"/>
    <isoform>
        <id>Q38950-1</id>
        <name>1</name>
        <sequence type="displayed"/>
    </isoform>
    <text>A number of isoforms are produced. According to EST sequences.</text>
</comment>
<comment type="tissue specificity">
    <text evidence="4">Ubiquitous, with higher levels in roots and flowers (at protein level).</text>
</comment>
<comment type="domain">
    <text evidence="1">Each HEAT repeat appears to consist of two alpha helices joined by a hydrophilic region, the intrarepeat loop. The repeat units may be arranged laterally to form a rod-like structure (By similarity).</text>
</comment>
<comment type="similarity">
    <text evidence="9">Belongs to the phosphatase 2A regulatory subunit A family.</text>
</comment>
<proteinExistence type="evidence at protein level"/>